<dbReference type="EC" id="2.3.1.117" evidence="1"/>
<dbReference type="EMBL" id="CP001396">
    <property type="protein sequence ID" value="ACR61740.1"/>
    <property type="molecule type" value="Genomic_DNA"/>
</dbReference>
<dbReference type="RefSeq" id="WP_001186650.1">
    <property type="nucleotide sequence ID" value="NC_012759.1"/>
</dbReference>
<dbReference type="SMR" id="C4ZRQ8"/>
<dbReference type="GeneID" id="93777259"/>
<dbReference type="KEGG" id="ebw:BWG_0158"/>
<dbReference type="HOGENOM" id="CLU_050859_0_1_6"/>
<dbReference type="UniPathway" id="UPA00034">
    <property type="reaction ID" value="UER00019"/>
</dbReference>
<dbReference type="GO" id="GO:0005737">
    <property type="term" value="C:cytoplasm"/>
    <property type="evidence" value="ECO:0007669"/>
    <property type="project" value="UniProtKB-SubCell"/>
</dbReference>
<dbReference type="GO" id="GO:0008666">
    <property type="term" value="F:2,3,4,5-tetrahydropyridine-2,6-dicarboxylate N-succinyltransferase activity"/>
    <property type="evidence" value="ECO:0007669"/>
    <property type="project" value="UniProtKB-UniRule"/>
</dbReference>
<dbReference type="GO" id="GO:0016779">
    <property type="term" value="F:nucleotidyltransferase activity"/>
    <property type="evidence" value="ECO:0007669"/>
    <property type="project" value="TreeGrafter"/>
</dbReference>
<dbReference type="GO" id="GO:0019877">
    <property type="term" value="P:diaminopimelate biosynthetic process"/>
    <property type="evidence" value="ECO:0007669"/>
    <property type="project" value="UniProtKB-UniRule"/>
</dbReference>
<dbReference type="GO" id="GO:0009089">
    <property type="term" value="P:lysine biosynthetic process via diaminopimelate"/>
    <property type="evidence" value="ECO:0007669"/>
    <property type="project" value="UniProtKB-UniRule"/>
</dbReference>
<dbReference type="CDD" id="cd03350">
    <property type="entry name" value="LbH_THP_succinylT"/>
    <property type="match status" value="1"/>
</dbReference>
<dbReference type="FunFam" id="1.10.166.10:FF:000001">
    <property type="entry name" value="2,3,4,5-tetrahydropyridine-2,6-dicarboxylate N-succinyltransferase"/>
    <property type="match status" value="1"/>
</dbReference>
<dbReference type="FunFam" id="2.160.10.10:FF:000004">
    <property type="entry name" value="2,3,4,5-tetrahydropyridine-2,6-dicarboxylate N-succinyltransferase"/>
    <property type="match status" value="1"/>
</dbReference>
<dbReference type="Gene3D" id="2.160.10.10">
    <property type="entry name" value="Hexapeptide repeat proteins"/>
    <property type="match status" value="1"/>
</dbReference>
<dbReference type="Gene3D" id="1.10.166.10">
    <property type="entry name" value="Tetrahydrodipicolinate-N-succinyltransferase, N-terminal domain"/>
    <property type="match status" value="1"/>
</dbReference>
<dbReference type="HAMAP" id="MF_00811">
    <property type="entry name" value="DapD"/>
    <property type="match status" value="1"/>
</dbReference>
<dbReference type="InterPro" id="IPR005664">
    <property type="entry name" value="DapD_Trfase_Hexpep_rpt_fam"/>
</dbReference>
<dbReference type="InterPro" id="IPR001451">
    <property type="entry name" value="Hexapep"/>
</dbReference>
<dbReference type="InterPro" id="IPR018357">
    <property type="entry name" value="Hexapep_transf_CS"/>
</dbReference>
<dbReference type="InterPro" id="IPR023180">
    <property type="entry name" value="THP_succinylTrfase_dom1"/>
</dbReference>
<dbReference type="InterPro" id="IPR037133">
    <property type="entry name" value="THP_succinylTrfase_N_sf"/>
</dbReference>
<dbReference type="InterPro" id="IPR011004">
    <property type="entry name" value="Trimer_LpxA-like_sf"/>
</dbReference>
<dbReference type="NCBIfam" id="TIGR00965">
    <property type="entry name" value="dapD"/>
    <property type="match status" value="1"/>
</dbReference>
<dbReference type="NCBIfam" id="NF008808">
    <property type="entry name" value="PRK11830.1"/>
    <property type="match status" value="1"/>
</dbReference>
<dbReference type="PANTHER" id="PTHR19136:SF52">
    <property type="entry name" value="2,3,4,5-TETRAHYDROPYRIDINE-2,6-DICARBOXYLATE N-SUCCINYLTRANSFERASE"/>
    <property type="match status" value="1"/>
</dbReference>
<dbReference type="PANTHER" id="PTHR19136">
    <property type="entry name" value="MOLYBDENUM COFACTOR GUANYLYLTRANSFERASE"/>
    <property type="match status" value="1"/>
</dbReference>
<dbReference type="Pfam" id="PF14602">
    <property type="entry name" value="Hexapep_2"/>
    <property type="match status" value="1"/>
</dbReference>
<dbReference type="Pfam" id="PF14805">
    <property type="entry name" value="THDPS_N_2"/>
    <property type="match status" value="1"/>
</dbReference>
<dbReference type="SUPFAM" id="SSF51161">
    <property type="entry name" value="Trimeric LpxA-like enzymes"/>
    <property type="match status" value="1"/>
</dbReference>
<dbReference type="PROSITE" id="PS00101">
    <property type="entry name" value="HEXAPEP_TRANSFERASES"/>
    <property type="match status" value="1"/>
</dbReference>
<organism>
    <name type="scientific">Escherichia coli (strain K12 / MC4100 / BW2952)</name>
    <dbReference type="NCBI Taxonomy" id="595496"/>
    <lineage>
        <taxon>Bacteria</taxon>
        <taxon>Pseudomonadati</taxon>
        <taxon>Pseudomonadota</taxon>
        <taxon>Gammaproteobacteria</taxon>
        <taxon>Enterobacterales</taxon>
        <taxon>Enterobacteriaceae</taxon>
        <taxon>Escherichia</taxon>
    </lineage>
</organism>
<sequence>MQQLQNIIETAFERRAEITPANADTVTREAVNQVIALLDSGALRVAEKIDGQWVTHQWLKKAVLLSFRINDNQVIEGAESRYFDKVPMKFADYDEARFQKEGFRVVPPAAVRQGAFIARNTVLMPSYVNIGAYVDEGTMVDTWATVGSCAQIGKNVHLSGGVGIGGVLEPLQANPTIIEDNCFIGARSEVVEGVIVEEGSVISMGVYIGQSTRIYDRETGEIHYGRVPAGSVVVSGNLPSKDGKYSLYCAVIVKKVDAKTRGKVGINELLRTID</sequence>
<reference key="1">
    <citation type="journal article" date="2009" name="J. Bacteriol.">
        <title>Genomic sequencing reveals regulatory mutations and recombinational events in the widely used MC4100 lineage of Escherichia coli K-12.</title>
        <authorList>
            <person name="Ferenci T."/>
            <person name="Zhou Z."/>
            <person name="Betteridge T."/>
            <person name="Ren Y."/>
            <person name="Liu Y."/>
            <person name="Feng L."/>
            <person name="Reeves P.R."/>
            <person name="Wang L."/>
        </authorList>
    </citation>
    <scope>NUCLEOTIDE SEQUENCE [LARGE SCALE GENOMIC DNA]</scope>
    <source>
        <strain>K12 / MC4100 / BW2952</strain>
    </source>
</reference>
<accession>C4ZRQ8</accession>
<name>DAPD_ECOBW</name>
<evidence type="ECO:0000255" key="1">
    <source>
        <dbReference type="HAMAP-Rule" id="MF_00811"/>
    </source>
</evidence>
<feature type="chain" id="PRO_1000213018" description="2,3,4,5-tetrahydropyridine-2,6-dicarboxylate N-succinyltransferase">
    <location>
        <begin position="1"/>
        <end position="274"/>
    </location>
</feature>
<feature type="binding site" evidence="1">
    <location>
        <position position="104"/>
    </location>
    <ligand>
        <name>substrate</name>
    </ligand>
</feature>
<feature type="binding site" evidence="1">
    <location>
        <position position="141"/>
    </location>
    <ligand>
        <name>substrate</name>
    </ligand>
</feature>
<keyword id="KW-0012">Acyltransferase</keyword>
<keyword id="KW-0028">Amino-acid biosynthesis</keyword>
<keyword id="KW-0963">Cytoplasm</keyword>
<keyword id="KW-0220">Diaminopimelate biosynthesis</keyword>
<keyword id="KW-0457">Lysine biosynthesis</keyword>
<keyword id="KW-0677">Repeat</keyword>
<keyword id="KW-0808">Transferase</keyword>
<gene>
    <name evidence="1" type="primary">dapD</name>
    <name type="ordered locus">BWG_0158</name>
</gene>
<proteinExistence type="inferred from homology"/>
<protein>
    <recommendedName>
        <fullName evidence="1">2,3,4,5-tetrahydropyridine-2,6-dicarboxylate N-succinyltransferase</fullName>
        <ecNumber evidence="1">2.3.1.117</ecNumber>
    </recommendedName>
    <alternativeName>
        <fullName evidence="1">Tetrahydrodipicolinate N-succinyltransferase</fullName>
        <shortName evidence="1">THDP succinyltransferase</shortName>
        <shortName evidence="1">THP succinyltransferase</shortName>
        <shortName evidence="1">Tetrahydropicolinate succinylase</shortName>
    </alternativeName>
</protein>
<comment type="catalytic activity">
    <reaction evidence="1">
        <text>(S)-2,3,4,5-tetrahydrodipicolinate + succinyl-CoA + H2O = (S)-2-succinylamino-6-oxoheptanedioate + CoA</text>
        <dbReference type="Rhea" id="RHEA:17325"/>
        <dbReference type="ChEBI" id="CHEBI:15377"/>
        <dbReference type="ChEBI" id="CHEBI:15685"/>
        <dbReference type="ChEBI" id="CHEBI:16845"/>
        <dbReference type="ChEBI" id="CHEBI:57287"/>
        <dbReference type="ChEBI" id="CHEBI:57292"/>
        <dbReference type="EC" id="2.3.1.117"/>
    </reaction>
</comment>
<comment type="pathway">
    <text evidence="1">Amino-acid biosynthesis; L-lysine biosynthesis via DAP pathway; LL-2,6-diaminopimelate from (S)-tetrahydrodipicolinate (succinylase route): step 1/3.</text>
</comment>
<comment type="subunit">
    <text evidence="1">Homotrimer.</text>
</comment>
<comment type="subcellular location">
    <subcellularLocation>
        <location evidence="1">Cytoplasm</location>
    </subcellularLocation>
</comment>
<comment type="similarity">
    <text evidence="1">Belongs to the transferase hexapeptide repeat family.</text>
</comment>